<reference key="1">
    <citation type="journal article" date="2002" name="Nature">
        <title>The genome sequence of Schizosaccharomyces pombe.</title>
        <authorList>
            <person name="Wood V."/>
            <person name="Gwilliam R."/>
            <person name="Rajandream M.A."/>
            <person name="Lyne M.H."/>
            <person name="Lyne R."/>
            <person name="Stewart A."/>
            <person name="Sgouros J.G."/>
            <person name="Peat N."/>
            <person name="Hayles J."/>
            <person name="Baker S.G."/>
            <person name="Basham D."/>
            <person name="Bowman S."/>
            <person name="Brooks K."/>
            <person name="Brown D."/>
            <person name="Brown S."/>
            <person name="Chillingworth T."/>
            <person name="Churcher C.M."/>
            <person name="Collins M."/>
            <person name="Connor R."/>
            <person name="Cronin A."/>
            <person name="Davis P."/>
            <person name="Feltwell T."/>
            <person name="Fraser A."/>
            <person name="Gentles S."/>
            <person name="Goble A."/>
            <person name="Hamlin N."/>
            <person name="Harris D.E."/>
            <person name="Hidalgo J."/>
            <person name="Hodgson G."/>
            <person name="Holroyd S."/>
            <person name="Hornsby T."/>
            <person name="Howarth S."/>
            <person name="Huckle E.J."/>
            <person name="Hunt S."/>
            <person name="Jagels K."/>
            <person name="James K.D."/>
            <person name="Jones L."/>
            <person name="Jones M."/>
            <person name="Leather S."/>
            <person name="McDonald S."/>
            <person name="McLean J."/>
            <person name="Mooney P."/>
            <person name="Moule S."/>
            <person name="Mungall K.L."/>
            <person name="Murphy L.D."/>
            <person name="Niblett D."/>
            <person name="Odell C."/>
            <person name="Oliver K."/>
            <person name="O'Neil S."/>
            <person name="Pearson D."/>
            <person name="Quail M.A."/>
            <person name="Rabbinowitsch E."/>
            <person name="Rutherford K.M."/>
            <person name="Rutter S."/>
            <person name="Saunders D."/>
            <person name="Seeger K."/>
            <person name="Sharp S."/>
            <person name="Skelton J."/>
            <person name="Simmonds M.N."/>
            <person name="Squares R."/>
            <person name="Squares S."/>
            <person name="Stevens K."/>
            <person name="Taylor K."/>
            <person name="Taylor R.G."/>
            <person name="Tivey A."/>
            <person name="Walsh S.V."/>
            <person name="Warren T."/>
            <person name="Whitehead S."/>
            <person name="Woodward J.R."/>
            <person name="Volckaert G."/>
            <person name="Aert R."/>
            <person name="Robben J."/>
            <person name="Grymonprez B."/>
            <person name="Weltjens I."/>
            <person name="Vanstreels E."/>
            <person name="Rieger M."/>
            <person name="Schaefer M."/>
            <person name="Mueller-Auer S."/>
            <person name="Gabel C."/>
            <person name="Fuchs M."/>
            <person name="Duesterhoeft A."/>
            <person name="Fritzc C."/>
            <person name="Holzer E."/>
            <person name="Moestl D."/>
            <person name="Hilbert H."/>
            <person name="Borzym K."/>
            <person name="Langer I."/>
            <person name="Beck A."/>
            <person name="Lehrach H."/>
            <person name="Reinhardt R."/>
            <person name="Pohl T.M."/>
            <person name="Eger P."/>
            <person name="Zimmermann W."/>
            <person name="Wedler H."/>
            <person name="Wambutt R."/>
            <person name="Purnelle B."/>
            <person name="Goffeau A."/>
            <person name="Cadieu E."/>
            <person name="Dreano S."/>
            <person name="Gloux S."/>
            <person name="Lelaure V."/>
            <person name="Mottier S."/>
            <person name="Galibert F."/>
            <person name="Aves S.J."/>
            <person name="Xiang Z."/>
            <person name="Hunt C."/>
            <person name="Moore K."/>
            <person name="Hurst S.M."/>
            <person name="Lucas M."/>
            <person name="Rochet M."/>
            <person name="Gaillardin C."/>
            <person name="Tallada V.A."/>
            <person name="Garzon A."/>
            <person name="Thode G."/>
            <person name="Daga R.R."/>
            <person name="Cruzado L."/>
            <person name="Jimenez J."/>
            <person name="Sanchez M."/>
            <person name="del Rey F."/>
            <person name="Benito J."/>
            <person name="Dominguez A."/>
            <person name="Revuelta J.L."/>
            <person name="Moreno S."/>
            <person name="Armstrong J."/>
            <person name="Forsburg S.L."/>
            <person name="Cerutti L."/>
            <person name="Lowe T."/>
            <person name="McCombie W.R."/>
            <person name="Paulsen I."/>
            <person name="Potashkin J."/>
            <person name="Shpakovski G.V."/>
            <person name="Ussery D."/>
            <person name="Barrell B.G."/>
            <person name="Nurse P."/>
        </authorList>
    </citation>
    <scope>NUCLEOTIDE SEQUENCE [LARGE SCALE GENOMIC DNA]</scope>
    <source>
        <strain>972 / ATCC 24843</strain>
    </source>
</reference>
<reference key="2">
    <citation type="journal article" date="2006" name="Nat. Biotechnol.">
        <title>ORFeome cloning and global analysis of protein localization in the fission yeast Schizosaccharomyces pombe.</title>
        <authorList>
            <person name="Matsuyama A."/>
            <person name="Arai R."/>
            <person name="Yashiroda Y."/>
            <person name="Shirai A."/>
            <person name="Kamata A."/>
            <person name="Sekido S."/>
            <person name="Kobayashi Y."/>
            <person name="Hashimoto A."/>
            <person name="Hamamoto M."/>
            <person name="Hiraoka Y."/>
            <person name="Horinouchi S."/>
            <person name="Yoshida M."/>
        </authorList>
    </citation>
    <scope>SUBCELLULAR LOCATION [LARGE SCALE ANALYSIS]</scope>
</reference>
<reference key="3">
    <citation type="journal article" date="2008" name="J. Proteome Res.">
        <title>Phosphoproteome analysis of fission yeast.</title>
        <authorList>
            <person name="Wilson-Grady J.T."/>
            <person name="Villen J."/>
            <person name="Gygi S.P."/>
        </authorList>
    </citation>
    <scope>PHOSPHORYLATION [LARGE SCALE ANALYSIS] AT SER-29</scope>
    <scope>IDENTIFICATION BY MASS SPECTROMETRY</scope>
</reference>
<feature type="chain" id="PRO_0000373992" description="Nuclear cap-binding protein subunit 1">
    <location>
        <begin position="1"/>
        <end position="780"/>
    </location>
</feature>
<feature type="domain" description="MIF4G">
    <location>
        <begin position="34"/>
        <end position="249"/>
    </location>
</feature>
<feature type="region of interest" description="Disordered" evidence="2">
    <location>
        <begin position="1"/>
        <end position="25"/>
    </location>
</feature>
<feature type="region of interest" description="Disordered" evidence="2">
    <location>
        <begin position="738"/>
        <end position="780"/>
    </location>
</feature>
<feature type="modified residue" description="Phosphoserine" evidence="4">
    <location>
        <position position="29"/>
    </location>
</feature>
<name>NCBP1_SCHPO</name>
<organism>
    <name type="scientific">Schizosaccharomyces pombe (strain 972 / ATCC 24843)</name>
    <name type="common">Fission yeast</name>
    <dbReference type="NCBI Taxonomy" id="284812"/>
    <lineage>
        <taxon>Eukaryota</taxon>
        <taxon>Fungi</taxon>
        <taxon>Dikarya</taxon>
        <taxon>Ascomycota</taxon>
        <taxon>Taphrinomycotina</taxon>
        <taxon>Schizosaccharomycetes</taxon>
        <taxon>Schizosaccharomycetales</taxon>
        <taxon>Schizosaccharomycetaceae</taxon>
        <taxon>Schizosaccharomyces</taxon>
    </lineage>
</organism>
<protein>
    <recommendedName>
        <fullName>Nuclear cap-binding protein subunit 1</fullName>
    </recommendedName>
    <alternativeName>
        <fullName>80 kDa nuclear cap-binding protein</fullName>
        <shortName>CBP80</shortName>
        <shortName>NCBP 80 kDa subunit</shortName>
    </alternativeName>
</protein>
<comment type="function">
    <text evidence="1">Component of the CBC complex, which binds cotranscriptionally to the 5'-cap of pre-mRNAs and is involved in maturation, export and degradation of nuclear mRNAs.</text>
</comment>
<comment type="subunit">
    <text evidence="1">Component of the nuclear cap-binding complex (CBC), a heterodimer composed of cbc1 and cbc2 that interacts with capped RNAs.</text>
</comment>
<comment type="subcellular location">
    <subcellularLocation>
        <location evidence="1">Cytoplasm</location>
        <location evidence="1">Perinuclear region</location>
    </subcellularLocation>
    <subcellularLocation>
        <location evidence="3">Nucleus</location>
    </subcellularLocation>
</comment>
<comment type="similarity">
    <text evidence="5">Belongs to the NCBP1 family.</text>
</comment>
<evidence type="ECO:0000250" key="1">
    <source>
        <dbReference type="UniProtKB" id="P34160"/>
    </source>
</evidence>
<evidence type="ECO:0000256" key="2">
    <source>
        <dbReference type="SAM" id="MobiDB-lite"/>
    </source>
</evidence>
<evidence type="ECO:0000269" key="3">
    <source>
    </source>
</evidence>
<evidence type="ECO:0000269" key="4">
    <source>
    </source>
</evidence>
<evidence type="ECO:0000305" key="5"/>
<gene>
    <name type="primary">cbc1</name>
    <name type="ORF">SPAC6G10.07</name>
</gene>
<accession>O14253</accession>
<keyword id="KW-0963">Cytoplasm</keyword>
<keyword id="KW-0507">mRNA processing</keyword>
<keyword id="KW-0508">mRNA splicing</keyword>
<keyword id="KW-0509">mRNA transport</keyword>
<keyword id="KW-0539">Nucleus</keyword>
<keyword id="KW-0597">Phosphoprotein</keyword>
<keyword id="KW-1185">Reference proteome</keyword>
<keyword id="KW-0694">RNA-binding</keyword>
<keyword id="KW-0813">Transport</keyword>
<dbReference type="EMBL" id="CU329670">
    <property type="protein sequence ID" value="CAB11293.1"/>
    <property type="molecule type" value="Genomic_DNA"/>
</dbReference>
<dbReference type="PIR" id="T39057">
    <property type="entry name" value="T39057"/>
</dbReference>
<dbReference type="RefSeq" id="NP_594104.1">
    <property type="nucleotide sequence ID" value="NM_001019528.2"/>
</dbReference>
<dbReference type="SMR" id="O14253"/>
<dbReference type="BioGRID" id="279013">
    <property type="interactions" value="11"/>
</dbReference>
<dbReference type="FunCoup" id="O14253">
    <property type="interactions" value="813"/>
</dbReference>
<dbReference type="STRING" id="284812.O14253"/>
<dbReference type="iPTMnet" id="O14253"/>
<dbReference type="PaxDb" id="4896-SPAC6G10.07.1"/>
<dbReference type="EnsemblFungi" id="SPAC6G10.07.1">
    <property type="protein sequence ID" value="SPAC6G10.07.1:pep"/>
    <property type="gene ID" value="SPAC6G10.07"/>
</dbReference>
<dbReference type="GeneID" id="2542556"/>
<dbReference type="KEGG" id="spo:2542556"/>
<dbReference type="PomBase" id="SPAC6G10.07">
    <property type="gene designation" value="cbc1"/>
</dbReference>
<dbReference type="VEuPathDB" id="FungiDB:SPAC6G10.07"/>
<dbReference type="eggNOG" id="KOG1104">
    <property type="taxonomic scope" value="Eukaryota"/>
</dbReference>
<dbReference type="HOGENOM" id="CLU_013816_0_0_1"/>
<dbReference type="InParanoid" id="O14253"/>
<dbReference type="OMA" id="GCKSFTH"/>
<dbReference type="PhylomeDB" id="O14253"/>
<dbReference type="Reactome" id="R-SPO-113418">
    <property type="pathway name" value="Formation of the Early Elongation Complex"/>
</dbReference>
<dbReference type="Reactome" id="R-SPO-159227">
    <property type="pathway name" value="Transport of the SLBP independent Mature mRNA"/>
</dbReference>
<dbReference type="Reactome" id="R-SPO-159231">
    <property type="pathway name" value="Transport of Mature mRNA Derived from an Intronless Transcript"/>
</dbReference>
<dbReference type="Reactome" id="R-SPO-159236">
    <property type="pathway name" value="Transport of Mature mRNA derived from an Intron-Containing Transcript"/>
</dbReference>
<dbReference type="Reactome" id="R-SPO-674695">
    <property type="pathway name" value="RNA Polymerase II Pre-transcription Events"/>
</dbReference>
<dbReference type="Reactome" id="R-SPO-72086">
    <property type="pathway name" value="mRNA Capping"/>
</dbReference>
<dbReference type="Reactome" id="R-SPO-72163">
    <property type="pathway name" value="mRNA Splicing - Major Pathway"/>
</dbReference>
<dbReference type="Reactome" id="R-SPO-72203">
    <property type="pathway name" value="Processing of Capped Intron-Containing Pre-mRNA"/>
</dbReference>
<dbReference type="Reactome" id="R-SPO-77595">
    <property type="pathway name" value="Processing of Intronless Pre-mRNAs"/>
</dbReference>
<dbReference type="Reactome" id="R-SPO-975956">
    <property type="pathway name" value="Nonsense Mediated Decay (NMD) independent of the Exon Junction Complex (EJC)"/>
</dbReference>
<dbReference type="Reactome" id="R-SPO-975957">
    <property type="pathway name" value="Nonsense Mediated Decay (NMD) enhanced by the Exon Junction Complex (EJC)"/>
</dbReference>
<dbReference type="PRO" id="PR:O14253"/>
<dbReference type="Proteomes" id="UP000002485">
    <property type="component" value="Chromosome I"/>
</dbReference>
<dbReference type="GO" id="GO:0005829">
    <property type="term" value="C:cytosol"/>
    <property type="evidence" value="ECO:0007005"/>
    <property type="project" value="PomBase"/>
</dbReference>
<dbReference type="GO" id="GO:0005846">
    <property type="term" value="C:nuclear cap binding complex"/>
    <property type="evidence" value="ECO:0000318"/>
    <property type="project" value="GO_Central"/>
</dbReference>
<dbReference type="GO" id="GO:0005634">
    <property type="term" value="C:nucleus"/>
    <property type="evidence" value="ECO:0007005"/>
    <property type="project" value="PomBase"/>
</dbReference>
<dbReference type="GO" id="GO:0048471">
    <property type="term" value="C:perinuclear region of cytoplasm"/>
    <property type="evidence" value="ECO:0007669"/>
    <property type="project" value="UniProtKB-SubCell"/>
</dbReference>
<dbReference type="GO" id="GO:0003729">
    <property type="term" value="F:mRNA binding"/>
    <property type="evidence" value="ECO:0000318"/>
    <property type="project" value="GO_Central"/>
</dbReference>
<dbReference type="GO" id="GO:0000340">
    <property type="term" value="F:RNA 7-methylguanosine cap binding"/>
    <property type="evidence" value="ECO:0000305"/>
    <property type="project" value="PomBase"/>
</dbReference>
<dbReference type="GO" id="GO:0000339">
    <property type="term" value="F:RNA cap binding"/>
    <property type="evidence" value="ECO:0000318"/>
    <property type="project" value="GO_Central"/>
</dbReference>
<dbReference type="GO" id="GO:0006406">
    <property type="term" value="P:mRNA export from nucleus"/>
    <property type="evidence" value="ECO:0007669"/>
    <property type="project" value="InterPro"/>
</dbReference>
<dbReference type="GO" id="GO:0006397">
    <property type="term" value="P:mRNA processing"/>
    <property type="evidence" value="ECO:0007669"/>
    <property type="project" value="UniProtKB-KW"/>
</dbReference>
<dbReference type="GO" id="GO:0071039">
    <property type="term" value="P:nuclear polyadenylation-dependent CUT catabolic process"/>
    <property type="evidence" value="ECO:0000305"/>
    <property type="project" value="PomBase"/>
</dbReference>
<dbReference type="GO" id="GO:0000184">
    <property type="term" value="P:nuclear-transcribed mRNA catabolic process, nonsense-mediated decay"/>
    <property type="evidence" value="ECO:0000318"/>
    <property type="project" value="GO_Central"/>
</dbReference>
<dbReference type="GO" id="GO:0008380">
    <property type="term" value="P:RNA splicing"/>
    <property type="evidence" value="ECO:0007669"/>
    <property type="project" value="UniProtKB-KW"/>
</dbReference>
<dbReference type="FunFam" id="1.25.40.180:FF:000035">
    <property type="entry name" value="snRNA cap binding complex subunit (Gcr3)"/>
    <property type="match status" value="1"/>
</dbReference>
<dbReference type="Gene3D" id="1.25.40.180">
    <property type="match status" value="3"/>
</dbReference>
<dbReference type="InterPro" id="IPR016024">
    <property type="entry name" value="ARM-type_fold"/>
</dbReference>
<dbReference type="InterPro" id="IPR027159">
    <property type="entry name" value="CBP80"/>
</dbReference>
<dbReference type="InterPro" id="IPR015172">
    <property type="entry name" value="MIF4G-like_typ-1"/>
</dbReference>
<dbReference type="InterPro" id="IPR015174">
    <property type="entry name" value="MIF4G-like_typ-2"/>
</dbReference>
<dbReference type="InterPro" id="IPR003890">
    <property type="entry name" value="MIF4G-like_typ-3"/>
</dbReference>
<dbReference type="PANTHER" id="PTHR12412">
    <property type="entry name" value="CAP BINDING PROTEIN"/>
    <property type="match status" value="1"/>
</dbReference>
<dbReference type="PANTHER" id="PTHR12412:SF2">
    <property type="entry name" value="NUCLEAR CAP-BINDING PROTEIN SUBUNIT 1"/>
    <property type="match status" value="1"/>
</dbReference>
<dbReference type="Pfam" id="PF02854">
    <property type="entry name" value="MIF4G"/>
    <property type="match status" value="1"/>
</dbReference>
<dbReference type="Pfam" id="PF09088">
    <property type="entry name" value="MIF4G_like"/>
    <property type="match status" value="1"/>
</dbReference>
<dbReference type="Pfam" id="PF09090">
    <property type="entry name" value="MIF4G_like_2"/>
    <property type="match status" value="1"/>
</dbReference>
<dbReference type="SMART" id="SM00543">
    <property type="entry name" value="MIF4G"/>
    <property type="match status" value="1"/>
</dbReference>
<dbReference type="SUPFAM" id="SSF48371">
    <property type="entry name" value="ARM repeat"/>
    <property type="match status" value="3"/>
</dbReference>
<proteinExistence type="evidence at protein level"/>
<sequence length="780" mass="90078">MSSYRGSTRPRKRTREGENYGFRPHRGNSQELLAARIKKDITFLADPRGNSVAADDINYVAMSLSREANDPETISTILDCIQTTAFIIPVKIPHLATLIIRASLRVPLILEKAAAYFCLQYFTNLNSFLYYEAKVDLRMLICMSFALQPGTLKPLFSLLADAISKETKPSVWGDNFLRIILINLPYFIAANNDLGKKDFANEILDQCEIYVRHRKSSITLSNPLSIHDNLSEEELDLLYKQLILSRENDFTFPYISQPWKFFESDFVHIVPVSPSIPEWTFQPTPQQNELPSFKRFFELFNNFEIRTTPDASDVAASIFRDISVDVINHLEFNRVEAAQVLTDLDVYFTYKTFALRGTPVNELPNLDPSESRWKAEDIIVEAVLGELLGSQNTTYKPVYYHSLLIECCRIAPKILAPTFGRVIRLMYTMSSDLPLQTLDRFIDWFSHHLSNFNFHWKWNEWIPDVELDDLHPKKVFMRETITRELILSYYTRISDSLPEELRCLLGEQPSGPNFVYENETHPLYQQSSQIIEALRLHKPLEELDIILQSEEIQNSETSAVRLVMSCAYSLGSRSFSHALNVFEKHLNTLKHFSRKSLDSEIEVVDELFSFWKLQPFNAVMWLDKMLNYSIISITSIIEWLIKQDVTIWSRSYTWSLVNTTFNKLAARLRRSVSNKEDSSLINEANEEKEIVTNLLLSALRALISENAENIWVSHWLNLMLKYVESNFLSVKKDTIEEANEPVQENTSEEQEDTKMQPVDAVDEQPSENNQTAADATNEEK</sequence>